<dbReference type="EC" id="2.1.1.177" evidence="1"/>
<dbReference type="EMBL" id="CP000908">
    <property type="protein sequence ID" value="ABY30684.1"/>
    <property type="molecule type" value="Genomic_DNA"/>
</dbReference>
<dbReference type="RefSeq" id="WP_003604480.1">
    <property type="nucleotide sequence ID" value="NC_010172.1"/>
</dbReference>
<dbReference type="SMR" id="A9W528"/>
<dbReference type="GeneID" id="72989975"/>
<dbReference type="KEGG" id="mex:Mext_2289"/>
<dbReference type="eggNOG" id="COG1576">
    <property type="taxonomic scope" value="Bacteria"/>
</dbReference>
<dbReference type="HOGENOM" id="CLU_100552_1_1_5"/>
<dbReference type="BioCyc" id="MEXT419610:MEXT_RS11540-MONOMER"/>
<dbReference type="GO" id="GO:0005737">
    <property type="term" value="C:cytoplasm"/>
    <property type="evidence" value="ECO:0007669"/>
    <property type="project" value="UniProtKB-SubCell"/>
</dbReference>
<dbReference type="GO" id="GO:0070038">
    <property type="term" value="F:rRNA (pseudouridine-N3-)-methyltransferase activity"/>
    <property type="evidence" value="ECO:0007669"/>
    <property type="project" value="UniProtKB-UniRule"/>
</dbReference>
<dbReference type="CDD" id="cd18081">
    <property type="entry name" value="RlmH-like"/>
    <property type="match status" value="1"/>
</dbReference>
<dbReference type="Gene3D" id="3.40.1280.10">
    <property type="match status" value="1"/>
</dbReference>
<dbReference type="HAMAP" id="MF_00658">
    <property type="entry name" value="23SrRNA_methyltr_H"/>
    <property type="match status" value="1"/>
</dbReference>
<dbReference type="InterPro" id="IPR029028">
    <property type="entry name" value="Alpha/beta_knot_MTases"/>
</dbReference>
<dbReference type="InterPro" id="IPR003742">
    <property type="entry name" value="RlmH-like"/>
</dbReference>
<dbReference type="InterPro" id="IPR029026">
    <property type="entry name" value="tRNA_m1G_MTases_N"/>
</dbReference>
<dbReference type="NCBIfam" id="NF000989">
    <property type="entry name" value="PRK00103.2-3"/>
    <property type="match status" value="1"/>
</dbReference>
<dbReference type="NCBIfam" id="NF000991">
    <property type="entry name" value="PRK00103.2-5"/>
    <property type="match status" value="1"/>
</dbReference>
<dbReference type="PANTHER" id="PTHR33603">
    <property type="entry name" value="METHYLTRANSFERASE"/>
    <property type="match status" value="1"/>
</dbReference>
<dbReference type="PANTHER" id="PTHR33603:SF1">
    <property type="entry name" value="RIBOSOMAL RNA LARGE SUBUNIT METHYLTRANSFERASE H"/>
    <property type="match status" value="1"/>
</dbReference>
<dbReference type="Pfam" id="PF02590">
    <property type="entry name" value="SPOUT_MTase"/>
    <property type="match status" value="1"/>
</dbReference>
<dbReference type="PIRSF" id="PIRSF004505">
    <property type="entry name" value="MT_bac"/>
    <property type="match status" value="1"/>
</dbReference>
<dbReference type="SUPFAM" id="SSF75217">
    <property type="entry name" value="alpha/beta knot"/>
    <property type="match status" value="1"/>
</dbReference>
<name>RLMH_METEP</name>
<protein>
    <recommendedName>
        <fullName evidence="1">Ribosomal RNA large subunit methyltransferase H</fullName>
        <ecNumber evidence="1">2.1.1.177</ecNumber>
    </recommendedName>
    <alternativeName>
        <fullName evidence="1">23S rRNA (pseudouridine1915-N3)-methyltransferase</fullName>
    </alternativeName>
    <alternativeName>
        <fullName evidence="1">23S rRNA m3Psi1915 methyltransferase</fullName>
    </alternativeName>
    <alternativeName>
        <fullName evidence="1">rRNA (pseudouridine-N3-)-methyltransferase RlmH</fullName>
    </alternativeName>
</protein>
<accession>A9W528</accession>
<reference key="1">
    <citation type="submission" date="2007-12" db="EMBL/GenBank/DDBJ databases">
        <title>Complete sequence of Methylobacterium extorquens PA1.</title>
        <authorList>
            <consortium name="US DOE Joint Genome Institute"/>
            <person name="Copeland A."/>
            <person name="Lucas S."/>
            <person name="Lapidus A."/>
            <person name="Barry K."/>
            <person name="Glavina del Rio T."/>
            <person name="Dalin E."/>
            <person name="Tice H."/>
            <person name="Pitluck S."/>
            <person name="Saunders E."/>
            <person name="Brettin T."/>
            <person name="Bruce D."/>
            <person name="Detter J.C."/>
            <person name="Han C."/>
            <person name="Schmutz J."/>
            <person name="Larimer F."/>
            <person name="Land M."/>
            <person name="Hauser L."/>
            <person name="Kyrpides N."/>
            <person name="Kim E."/>
            <person name="Marx C."/>
            <person name="Richardson P."/>
        </authorList>
    </citation>
    <scope>NUCLEOTIDE SEQUENCE [LARGE SCALE GENOMIC DNA]</scope>
    <source>
        <strain>PA1</strain>
    </source>
</reference>
<proteinExistence type="inferred from homology"/>
<feature type="chain" id="PRO_0000366620" description="Ribosomal RNA large subunit methyltransferase H">
    <location>
        <begin position="1"/>
        <end position="165"/>
    </location>
</feature>
<feature type="binding site" evidence="1">
    <location>
        <position position="109"/>
    </location>
    <ligand>
        <name>S-adenosyl-L-methionine</name>
        <dbReference type="ChEBI" id="CHEBI:59789"/>
    </ligand>
</feature>
<organism>
    <name type="scientific">Methylorubrum extorquens (strain PA1)</name>
    <name type="common">Methylobacterium extorquens</name>
    <dbReference type="NCBI Taxonomy" id="419610"/>
    <lineage>
        <taxon>Bacteria</taxon>
        <taxon>Pseudomonadati</taxon>
        <taxon>Pseudomonadota</taxon>
        <taxon>Alphaproteobacteria</taxon>
        <taxon>Hyphomicrobiales</taxon>
        <taxon>Methylobacteriaceae</taxon>
        <taxon>Methylorubrum</taxon>
    </lineage>
</organism>
<gene>
    <name evidence="1" type="primary">rlmH</name>
    <name type="ordered locus">Mext_2289</name>
</gene>
<evidence type="ECO:0000255" key="1">
    <source>
        <dbReference type="HAMAP-Rule" id="MF_00658"/>
    </source>
</evidence>
<sequence>MRLLVVAIGRLKNGPERDLAARYRERAVALGKGLGVTACDLTEIPESRARRSADRIAEEAAAILALVPADAAVIACDERGRSDWPSERIADKIGAWRDAGRSTLVLVVGGADGLHETVRGRADHILAFGAATLPHGLVRVLALEQVYRALTILAGHPYHRGDPEA</sequence>
<keyword id="KW-0963">Cytoplasm</keyword>
<keyword id="KW-0489">Methyltransferase</keyword>
<keyword id="KW-0698">rRNA processing</keyword>
<keyword id="KW-0949">S-adenosyl-L-methionine</keyword>
<keyword id="KW-0808">Transferase</keyword>
<comment type="function">
    <text evidence="1">Specifically methylates the pseudouridine at position 1915 (m3Psi1915) in 23S rRNA.</text>
</comment>
<comment type="catalytic activity">
    <reaction evidence="1">
        <text>pseudouridine(1915) in 23S rRNA + S-adenosyl-L-methionine = N(3)-methylpseudouridine(1915) in 23S rRNA + S-adenosyl-L-homocysteine + H(+)</text>
        <dbReference type="Rhea" id="RHEA:42752"/>
        <dbReference type="Rhea" id="RHEA-COMP:10221"/>
        <dbReference type="Rhea" id="RHEA-COMP:10222"/>
        <dbReference type="ChEBI" id="CHEBI:15378"/>
        <dbReference type="ChEBI" id="CHEBI:57856"/>
        <dbReference type="ChEBI" id="CHEBI:59789"/>
        <dbReference type="ChEBI" id="CHEBI:65314"/>
        <dbReference type="ChEBI" id="CHEBI:74486"/>
        <dbReference type="EC" id="2.1.1.177"/>
    </reaction>
</comment>
<comment type="subunit">
    <text evidence="1">Homodimer.</text>
</comment>
<comment type="subcellular location">
    <subcellularLocation>
        <location evidence="1">Cytoplasm</location>
    </subcellularLocation>
</comment>
<comment type="similarity">
    <text evidence="1">Belongs to the RNA methyltransferase RlmH family.</text>
</comment>